<dbReference type="EMBL" id="Z35827">
    <property type="protein sequence ID" value="CAA84885.1"/>
    <property type="status" value="ALT_SEQ"/>
    <property type="molecule type" value="Genomic_DNA"/>
</dbReference>
<dbReference type="EMBL" id="Z23261">
    <property type="protein sequence ID" value="CAA80783.1"/>
    <property type="molecule type" value="Genomic_DNA"/>
</dbReference>
<dbReference type="EMBL" id="BK006936">
    <property type="protein sequence ID" value="DAA07055.1"/>
    <property type="molecule type" value="Genomic_DNA"/>
</dbReference>
<dbReference type="PIR" id="S45801">
    <property type="entry name" value="S45801"/>
</dbReference>
<dbReference type="RefSeq" id="NP_009487.2">
    <property type="nucleotide sequence ID" value="NM_001178306.1"/>
</dbReference>
<dbReference type="SMR" id="P34228"/>
<dbReference type="BioGRID" id="32634">
    <property type="interactions" value="136"/>
</dbReference>
<dbReference type="DIP" id="DIP-2559N"/>
<dbReference type="FunCoup" id="P34228">
    <property type="interactions" value="176"/>
</dbReference>
<dbReference type="IntAct" id="P34228">
    <property type="interactions" value="19"/>
</dbReference>
<dbReference type="MINT" id="P34228"/>
<dbReference type="STRING" id="4932.YBL066C"/>
<dbReference type="GlyGen" id="P34228">
    <property type="glycosylation" value="5 sites, 1 O-linked glycan (4 sites)"/>
</dbReference>
<dbReference type="iPTMnet" id="P34228"/>
<dbReference type="PaxDb" id="4932-YBL066C"/>
<dbReference type="PeptideAtlas" id="P34228"/>
<dbReference type="EnsemblFungi" id="YBL066C_mRNA">
    <property type="protein sequence ID" value="YBL066C"/>
    <property type="gene ID" value="YBL066C"/>
</dbReference>
<dbReference type="GeneID" id="852214"/>
<dbReference type="KEGG" id="sce:YBL066C"/>
<dbReference type="AGR" id="SGD:S000000162"/>
<dbReference type="SGD" id="S000000162">
    <property type="gene designation" value="SEF1"/>
</dbReference>
<dbReference type="VEuPathDB" id="FungiDB:YBL066C"/>
<dbReference type="eggNOG" id="ENOG502QR4T">
    <property type="taxonomic scope" value="Eukaryota"/>
</dbReference>
<dbReference type="GeneTree" id="ENSGT00940000176683"/>
<dbReference type="HOGENOM" id="CLU_010150_0_0_1"/>
<dbReference type="InParanoid" id="P34228"/>
<dbReference type="OMA" id="LVWCVHE"/>
<dbReference type="OrthoDB" id="3163292at2759"/>
<dbReference type="BioCyc" id="YEAST:G3O-28962-MONOMER"/>
<dbReference type="BioGRID-ORCS" id="852214">
    <property type="hits" value="0 hits in 10 CRISPR screens"/>
</dbReference>
<dbReference type="PRO" id="PR:P34228"/>
<dbReference type="Proteomes" id="UP000002311">
    <property type="component" value="Chromosome II"/>
</dbReference>
<dbReference type="RNAct" id="P34228">
    <property type="molecule type" value="protein"/>
</dbReference>
<dbReference type="GO" id="GO:0005634">
    <property type="term" value="C:nucleus"/>
    <property type="evidence" value="ECO:0000318"/>
    <property type="project" value="GO_Central"/>
</dbReference>
<dbReference type="GO" id="GO:0000981">
    <property type="term" value="F:DNA-binding transcription factor activity, RNA polymerase II-specific"/>
    <property type="evidence" value="ECO:0000318"/>
    <property type="project" value="GO_Central"/>
</dbReference>
<dbReference type="GO" id="GO:0000976">
    <property type="term" value="F:transcription cis-regulatory region binding"/>
    <property type="evidence" value="ECO:0000318"/>
    <property type="project" value="GO_Central"/>
</dbReference>
<dbReference type="GO" id="GO:0008270">
    <property type="term" value="F:zinc ion binding"/>
    <property type="evidence" value="ECO:0007669"/>
    <property type="project" value="InterPro"/>
</dbReference>
<dbReference type="GO" id="GO:0006351">
    <property type="term" value="P:DNA-templated transcription"/>
    <property type="evidence" value="ECO:0007669"/>
    <property type="project" value="InterPro"/>
</dbReference>
<dbReference type="GO" id="GO:0006355">
    <property type="term" value="P:regulation of DNA-templated transcription"/>
    <property type="evidence" value="ECO:0000318"/>
    <property type="project" value="GO_Central"/>
</dbReference>
<dbReference type="GO" id="GO:0030435">
    <property type="term" value="P:sporulation resulting in formation of a cellular spore"/>
    <property type="evidence" value="ECO:0007669"/>
    <property type="project" value="UniProtKB-KW"/>
</dbReference>
<dbReference type="CDD" id="cd12148">
    <property type="entry name" value="fungal_TF_MHR"/>
    <property type="match status" value="1"/>
</dbReference>
<dbReference type="CDD" id="cd00067">
    <property type="entry name" value="GAL4"/>
    <property type="match status" value="1"/>
</dbReference>
<dbReference type="FunFam" id="4.10.240.10:FF:000003">
    <property type="entry name" value="C6 transcription factor (Leu3)"/>
    <property type="match status" value="1"/>
</dbReference>
<dbReference type="Gene3D" id="4.10.240.10">
    <property type="entry name" value="Zn(2)-C6 fungal-type DNA-binding domain"/>
    <property type="match status" value="1"/>
</dbReference>
<dbReference type="InterPro" id="IPR051089">
    <property type="entry name" value="prtT"/>
</dbReference>
<dbReference type="InterPro" id="IPR007219">
    <property type="entry name" value="Transcription_factor_dom_fun"/>
</dbReference>
<dbReference type="InterPro" id="IPR036864">
    <property type="entry name" value="Zn2-C6_fun-type_DNA-bd_sf"/>
</dbReference>
<dbReference type="InterPro" id="IPR001138">
    <property type="entry name" value="Zn2Cys6_DnaBD"/>
</dbReference>
<dbReference type="PANTHER" id="PTHR31845">
    <property type="entry name" value="FINGER DOMAIN PROTEIN, PUTATIVE-RELATED"/>
    <property type="match status" value="1"/>
</dbReference>
<dbReference type="PANTHER" id="PTHR31845:SF6">
    <property type="entry name" value="TRANSCRIPTION FACTOR SEF1-RELATED"/>
    <property type="match status" value="1"/>
</dbReference>
<dbReference type="Pfam" id="PF04082">
    <property type="entry name" value="Fungal_trans"/>
    <property type="match status" value="1"/>
</dbReference>
<dbReference type="Pfam" id="PF00172">
    <property type="entry name" value="Zn_clus"/>
    <property type="match status" value="1"/>
</dbReference>
<dbReference type="SMART" id="SM00906">
    <property type="entry name" value="Fungal_trans"/>
    <property type="match status" value="1"/>
</dbReference>
<dbReference type="SMART" id="SM00066">
    <property type="entry name" value="GAL4"/>
    <property type="match status" value="1"/>
</dbReference>
<dbReference type="SUPFAM" id="SSF57701">
    <property type="entry name" value="Zn2/Cys6 DNA-binding domain"/>
    <property type="match status" value="1"/>
</dbReference>
<dbReference type="PROSITE" id="PS00463">
    <property type="entry name" value="ZN2_CY6_FUNGAL_1"/>
    <property type="match status" value="1"/>
</dbReference>
<dbReference type="PROSITE" id="PS50048">
    <property type="entry name" value="ZN2_CY6_FUNGAL_2"/>
    <property type="match status" value="1"/>
</dbReference>
<feature type="chain" id="PRO_0000114977" description="Putative transcription factor SEF1">
    <location>
        <begin position="1"/>
        <end position="1148"/>
    </location>
</feature>
<feature type="DNA-binding region" description="Zn(2)-C6 fungal-type" evidence="1">
    <location>
        <begin position="57"/>
        <end position="87"/>
    </location>
</feature>
<feature type="region of interest" description="Disordered" evidence="2">
    <location>
        <begin position="1"/>
        <end position="51"/>
    </location>
</feature>
<feature type="region of interest" description="Disordered" evidence="2">
    <location>
        <begin position="148"/>
        <end position="180"/>
    </location>
</feature>
<feature type="region of interest" description="Disordered" evidence="2">
    <location>
        <begin position="524"/>
        <end position="550"/>
    </location>
</feature>
<feature type="region of interest" description="Disordered" evidence="2">
    <location>
        <begin position="1029"/>
        <end position="1063"/>
    </location>
</feature>
<feature type="compositionally biased region" description="Low complexity" evidence="2">
    <location>
        <begin position="150"/>
        <end position="169"/>
    </location>
</feature>
<feature type="compositionally biased region" description="Basic and acidic residues" evidence="2">
    <location>
        <begin position="538"/>
        <end position="550"/>
    </location>
</feature>
<feature type="compositionally biased region" description="Polar residues" evidence="2">
    <location>
        <begin position="1029"/>
        <end position="1050"/>
    </location>
</feature>
<feature type="modified residue" description="Phosphoserine" evidence="6">
    <location>
        <position position="8"/>
    </location>
</feature>
<feature type="modified residue" description="Phosphoserine" evidence="5">
    <location>
        <position position="263"/>
    </location>
</feature>
<feature type="modified residue" description="Phosphoserine" evidence="6">
    <location>
        <position position="806"/>
    </location>
</feature>
<reference key="1">
    <citation type="journal article" date="1994" name="EMBO J.">
        <title>Complete DNA sequence of yeast chromosome II.</title>
        <authorList>
            <person name="Feldmann H."/>
            <person name="Aigle M."/>
            <person name="Aljinovic G."/>
            <person name="Andre B."/>
            <person name="Baclet M.C."/>
            <person name="Barthe C."/>
            <person name="Baur A."/>
            <person name="Becam A.-M."/>
            <person name="Biteau N."/>
            <person name="Boles E."/>
            <person name="Brandt T."/>
            <person name="Brendel M."/>
            <person name="Brueckner M."/>
            <person name="Bussereau F."/>
            <person name="Christiansen C."/>
            <person name="Contreras R."/>
            <person name="Crouzet M."/>
            <person name="Cziepluch C."/>
            <person name="Demolis N."/>
            <person name="Delaveau T."/>
            <person name="Doignon F."/>
            <person name="Domdey H."/>
            <person name="Duesterhus S."/>
            <person name="Dubois E."/>
            <person name="Dujon B."/>
            <person name="El Bakkoury M."/>
            <person name="Entian K.-D."/>
            <person name="Feuermann M."/>
            <person name="Fiers W."/>
            <person name="Fobo G.M."/>
            <person name="Fritz C."/>
            <person name="Gassenhuber J."/>
            <person name="Glansdorff N."/>
            <person name="Goffeau A."/>
            <person name="Grivell L.A."/>
            <person name="de Haan M."/>
            <person name="Hein C."/>
            <person name="Herbert C.J."/>
            <person name="Hollenberg C.P."/>
            <person name="Holmstroem K."/>
            <person name="Jacq C."/>
            <person name="Jacquet M."/>
            <person name="Jauniaux J.-C."/>
            <person name="Jonniaux J.-L."/>
            <person name="Kallesoee T."/>
            <person name="Kiesau P."/>
            <person name="Kirchrath L."/>
            <person name="Koetter P."/>
            <person name="Korol S."/>
            <person name="Liebl S."/>
            <person name="Logghe M."/>
            <person name="Lohan A.J.E."/>
            <person name="Louis E.J."/>
            <person name="Li Z.Y."/>
            <person name="Maat M.J."/>
            <person name="Mallet L."/>
            <person name="Mannhaupt G."/>
            <person name="Messenguy F."/>
            <person name="Miosga T."/>
            <person name="Molemans F."/>
            <person name="Mueller S."/>
            <person name="Nasr F."/>
            <person name="Obermaier B."/>
            <person name="Perea J."/>
            <person name="Pierard A."/>
            <person name="Piravandi E."/>
            <person name="Pohl F.M."/>
            <person name="Pohl T.M."/>
            <person name="Potier S."/>
            <person name="Proft M."/>
            <person name="Purnelle B."/>
            <person name="Ramezani Rad M."/>
            <person name="Rieger M."/>
            <person name="Rose M."/>
            <person name="Schaaff-Gerstenschlaeger I."/>
            <person name="Scherens B."/>
            <person name="Schwarzlose C."/>
            <person name="Skala J."/>
            <person name="Slonimski P.P."/>
            <person name="Smits P.H.M."/>
            <person name="Souciet J.-L."/>
            <person name="Steensma H.Y."/>
            <person name="Stucka R."/>
            <person name="Urrestarazu L.A."/>
            <person name="van der Aart Q.J.M."/>
            <person name="Van Dyck L."/>
            <person name="Vassarotti A."/>
            <person name="Vetter I."/>
            <person name="Vierendeels F."/>
            <person name="Vissers S."/>
            <person name="Wagner G."/>
            <person name="de Wergifosse P."/>
            <person name="Wolfe K.H."/>
            <person name="Zagulski M."/>
            <person name="Zimmermann F.K."/>
            <person name="Mewes H.-W."/>
            <person name="Kleine K."/>
        </authorList>
    </citation>
    <scope>NUCLEOTIDE SEQUENCE [LARGE SCALE GENOMIC DNA]</scope>
    <source>
        <strain>ATCC 204508 / S288c</strain>
    </source>
</reference>
<reference key="2">
    <citation type="journal article" date="2014" name="G3 (Bethesda)">
        <title>The reference genome sequence of Saccharomyces cerevisiae: Then and now.</title>
        <authorList>
            <person name="Engel S.R."/>
            <person name="Dietrich F.S."/>
            <person name="Fisk D.G."/>
            <person name="Binkley G."/>
            <person name="Balakrishnan R."/>
            <person name="Costanzo M.C."/>
            <person name="Dwight S.S."/>
            <person name="Hitz B.C."/>
            <person name="Karra K."/>
            <person name="Nash R.S."/>
            <person name="Weng S."/>
            <person name="Wong E.D."/>
            <person name="Lloyd P."/>
            <person name="Skrzypek M.S."/>
            <person name="Miyasato S.R."/>
            <person name="Simison M."/>
            <person name="Cherry J.M."/>
        </authorList>
    </citation>
    <scope>GENOME REANNOTATION</scope>
    <source>
        <strain>ATCC 204508 / S288c</strain>
    </source>
</reference>
<reference key="3">
    <citation type="journal article" date="1993" name="Yeast">
        <title>Sequencing and functional analysis of a 32,560 bp segment on the left arm of yeast chromosome II. Identification of 26 open reading frames, including the KIP1 and SEC17 genes.</title>
        <authorList>
            <person name="Scherens B."/>
            <person name="el Bakkoury M."/>
            <person name="Vierendeels F."/>
            <person name="Dubois E."/>
            <person name="Messenguy F."/>
        </authorList>
    </citation>
    <scope>NUCLEOTIDE SEQUENCE [GENOMIC DNA] OF 1-789</scope>
    <source>
        <strain>ATCC 204508 / S288c</strain>
    </source>
</reference>
<reference key="4">
    <citation type="journal article" date="1998" name="Yeast">
        <title>Kluyveromyces lactis SEF1 and its Saccharomyces cerevisiae homologue bypass the unknown essential function, but not the mitochondrial RNase P function, of the S. cerevisiae RPM2 gene.</title>
        <authorList>
            <person name="Groom K.R."/>
            <person name="Heyman H.C."/>
            <person name="Steffen M.C."/>
            <person name="Hawkins L."/>
            <person name="Martin N.C."/>
        </authorList>
    </citation>
    <scope>FUNCTION</scope>
</reference>
<reference key="5">
    <citation type="journal article" date="2008" name="Mol. Cell. Proteomics">
        <title>A multidimensional chromatography technology for in-depth phosphoproteome analysis.</title>
        <authorList>
            <person name="Albuquerque C.P."/>
            <person name="Smolka M.B."/>
            <person name="Payne S.H."/>
            <person name="Bafna V."/>
            <person name="Eng J."/>
            <person name="Zhou H."/>
        </authorList>
    </citation>
    <scope>PHOSPHORYLATION [LARGE SCALE ANALYSIS] AT SER-263</scope>
    <scope>IDENTIFICATION BY MASS SPECTROMETRY [LARGE SCALE ANALYSIS]</scope>
</reference>
<reference key="6">
    <citation type="journal article" date="2009" name="Science">
        <title>Global analysis of Cdk1 substrate phosphorylation sites provides insights into evolution.</title>
        <authorList>
            <person name="Holt L.J."/>
            <person name="Tuch B.B."/>
            <person name="Villen J."/>
            <person name="Johnson A.D."/>
            <person name="Gygi S.P."/>
            <person name="Morgan D.O."/>
        </authorList>
    </citation>
    <scope>PHOSPHORYLATION [LARGE SCALE ANALYSIS] AT SER-8 AND SER-806</scope>
    <scope>IDENTIFICATION BY MASS SPECTROMETRY [LARGE SCALE ANALYSIS]</scope>
</reference>
<sequence length="1148" mass="127992">MVKDNRDSDQDQDFSSAHMKRQPEQQQLQQHQFPSKKQRISHHDDSHQINHRPVTSCTHCRQHKIKCDASQNFPHPCSRCEKIGLHCEINPQFRPKKGSQLQLLRQDVDEIKSKLDTLLANDSVFVHLLQQIPMGNSLLNKLNLHPTPTPGTIIPNPDSSPSSGSPTSSAAQRDSKVSVQTYLSREPQLLQANQGSNTNKFKANNEASSHMTLRASSLAQDSKGLVATEPNKLPPLLNDSALPNNSKESLPPALQMAFYKNNSAGNTPNGPFSPIQKTYSPHTTSTTVTTTTNQPPFAATSHVATNNNADRTKTPVVATTTTMPLLPSPHANVDEFVLGDISISIEKANRLHHIFVTRYLPYFPIMYSNNATELYSQSQLLFWTVMLTACLSDPEPTMYCKLSSLIKQLAIETCWIRTPRSTHISQALLILCIWPLPNQKVLDDCSYRFVGLAKSLSYQLGLHRGEFISEFTRTQTSMPNAEKWRTRTWLGIFFAELCWASILGLPPTSQTDYLLEKALSCGDEESEEDNNDSIDNNNNDKRNKKDEPHVESKYKLPGSFRRLLSLANFQAKLSHIIGSSTSSPDGLLEPKYRAETLSILGKELDLLAKTLNFQSDDTVNIYFLYVKLTVCCFAFLPETPPTDQIPYVTEAYLTATKIVTLLNNLLETHQLIELPIYIRQAATFSALILFKLQLTPLLPDKYFDSARQSVVTIHRLYRNQLTAWATSVENDISRTASMLEKLNFVLIMHPEVFVEEDGIISRMRSHLTGSLFYDLVWCVHEARRREMDPEYNKQALEKAAKKRKFSSNGIYNGTSSTGGITDRKLYPLPLYNHISRDDFETVTKTTPSGTTVTTLVPTKNALKQAEKLAKTNNGDSDGSIMEINGIPLSMLGETGSVKFQSLFANTSNSNDYNNNRTLLDASNDISIPSNSIYPVASVPASNNNPQSTKVDYYSNGPSVIPDLSMKRSVSTPVNHFPASVPGLRNHPVGNLSNNVTLGIDHPIPREHSNLQNVTMNYNNQFSNANAIGRSQSSMSHSRTPIASKSNNMTDLHSVVSDPGSSKSTAYPPLSLFSKSNDINSNKTNQRFSTGTNTVTSSNFQTIDNENNVKTPGNKLTDFFQQQSAGWIEGNSSNDDFFGWFDMNMEQGF</sequence>
<protein>
    <recommendedName>
        <fullName>Putative transcription factor SEF1</fullName>
    </recommendedName>
    <alternativeName>
        <fullName>Suppressor of essential function protein 1</fullName>
    </alternativeName>
    <alternativeName>
        <fullName>Suppressor protein SEF1</fullName>
    </alternativeName>
</protein>
<accession>P34228</accession>
<accession>D6VPT5</accession>
<keyword id="KW-0238">DNA-binding</keyword>
<keyword id="KW-0479">Metal-binding</keyword>
<keyword id="KW-0539">Nucleus</keyword>
<keyword id="KW-0597">Phosphoprotein</keyword>
<keyword id="KW-1185">Reference proteome</keyword>
<keyword id="KW-0749">Sporulation</keyword>
<keyword id="KW-0804">Transcription</keyword>
<keyword id="KW-0805">Transcription regulation</keyword>
<keyword id="KW-0862">Zinc</keyword>
<proteinExistence type="evidence at protein level"/>
<comment type="function">
    <text evidence="3">Putative transcription factor that seems to be involved in the sporulation process. Suppresses the lethal phenotype of RPM2 deletion.</text>
</comment>
<comment type="subcellular location">
    <subcellularLocation>
        <location evidence="4">Nucleus</location>
    </subcellularLocation>
</comment>
<comment type="sequence caution" evidence="4">
    <conflict type="miscellaneous discrepancy">
        <sequence resource="EMBL-CDS" id="CAA84885"/>
    </conflict>
    <text>Sequencing errors.</text>
</comment>
<evidence type="ECO:0000255" key="1">
    <source>
        <dbReference type="PROSITE-ProRule" id="PRU00227"/>
    </source>
</evidence>
<evidence type="ECO:0000256" key="2">
    <source>
        <dbReference type="SAM" id="MobiDB-lite"/>
    </source>
</evidence>
<evidence type="ECO:0000269" key="3">
    <source>
    </source>
</evidence>
<evidence type="ECO:0000305" key="4"/>
<evidence type="ECO:0007744" key="5">
    <source>
    </source>
</evidence>
<evidence type="ECO:0007744" key="6">
    <source>
    </source>
</evidence>
<organism>
    <name type="scientific">Saccharomyces cerevisiae (strain ATCC 204508 / S288c)</name>
    <name type="common">Baker's yeast</name>
    <dbReference type="NCBI Taxonomy" id="559292"/>
    <lineage>
        <taxon>Eukaryota</taxon>
        <taxon>Fungi</taxon>
        <taxon>Dikarya</taxon>
        <taxon>Ascomycota</taxon>
        <taxon>Saccharomycotina</taxon>
        <taxon>Saccharomycetes</taxon>
        <taxon>Saccharomycetales</taxon>
        <taxon>Saccharomycetaceae</taxon>
        <taxon>Saccharomyces</taxon>
    </lineage>
</organism>
<name>SEF1_YEAST</name>
<gene>
    <name type="primary">SEF1</name>
    <name type="ordered locus">YBL066C</name>
    <name type="ORF">YBL0501</name>
    <name type="ORF">YBL0526</name>
</gene>